<reference key="1">
    <citation type="journal article" date="2009" name="Science">
        <title>The dynamics and time scale of ongoing genomic erosion in symbiotic bacteria.</title>
        <authorList>
            <person name="Moran N.A."/>
            <person name="McLaughlin H.J."/>
            <person name="Sorek R."/>
        </authorList>
    </citation>
    <scope>NUCLEOTIDE SEQUENCE [LARGE SCALE GENOMIC DNA]</scope>
    <source>
        <strain>Tuc7</strain>
    </source>
</reference>
<organism>
    <name type="scientific">Buchnera aphidicola subsp. Acyrthosiphon pisum (strain Tuc7)</name>
    <dbReference type="NCBI Taxonomy" id="561501"/>
    <lineage>
        <taxon>Bacteria</taxon>
        <taxon>Pseudomonadati</taxon>
        <taxon>Pseudomonadota</taxon>
        <taxon>Gammaproteobacteria</taxon>
        <taxon>Enterobacterales</taxon>
        <taxon>Erwiniaceae</taxon>
        <taxon>Buchnera</taxon>
    </lineage>
</organism>
<proteinExistence type="inferred from homology"/>
<gene>
    <name evidence="1" type="primary">acpP</name>
    <name type="ordered locus">BUAPTUC7_346</name>
</gene>
<accession>B8D7N9</accession>
<name>ACP_BUCAT</name>
<evidence type="ECO:0000255" key="1">
    <source>
        <dbReference type="HAMAP-Rule" id="MF_01217"/>
    </source>
</evidence>
<evidence type="ECO:0000255" key="2">
    <source>
        <dbReference type="PROSITE-ProRule" id="PRU00258"/>
    </source>
</evidence>
<protein>
    <recommendedName>
        <fullName evidence="1">Acyl carrier protein</fullName>
        <shortName evidence="1">ACP</shortName>
    </recommendedName>
</protein>
<sequence length="80" mass="9377">MKNIEERIKKIIFEKLDIKQEKIFNDASFIDDLGADSLDTVELIMALEEEFDIEISDEEAEKINTVQKSIDFIQKKNLKK</sequence>
<feature type="chain" id="PRO_1000164776" description="Acyl carrier protein">
    <location>
        <begin position="1"/>
        <end position="80"/>
    </location>
</feature>
<feature type="domain" description="Carrier" evidence="2">
    <location>
        <begin position="2"/>
        <end position="77"/>
    </location>
</feature>
<feature type="modified residue" description="O-(pantetheine 4'-phosphoryl)serine" evidence="2">
    <location>
        <position position="37"/>
    </location>
</feature>
<dbReference type="EMBL" id="CP001158">
    <property type="protein sequence ID" value="ACL30154.1"/>
    <property type="molecule type" value="Genomic_DNA"/>
</dbReference>
<dbReference type="RefSeq" id="WP_010896080.1">
    <property type="nucleotide sequence ID" value="NC_011834.1"/>
</dbReference>
<dbReference type="SMR" id="B8D7N9"/>
<dbReference type="KEGG" id="bau:BUAPTUC7_346"/>
<dbReference type="HOGENOM" id="CLU_108696_5_1_6"/>
<dbReference type="UniPathway" id="UPA00094"/>
<dbReference type="GO" id="GO:0005829">
    <property type="term" value="C:cytosol"/>
    <property type="evidence" value="ECO:0007669"/>
    <property type="project" value="TreeGrafter"/>
</dbReference>
<dbReference type="GO" id="GO:0016020">
    <property type="term" value="C:membrane"/>
    <property type="evidence" value="ECO:0007669"/>
    <property type="project" value="GOC"/>
</dbReference>
<dbReference type="GO" id="GO:0000035">
    <property type="term" value="F:acyl binding"/>
    <property type="evidence" value="ECO:0007669"/>
    <property type="project" value="TreeGrafter"/>
</dbReference>
<dbReference type="GO" id="GO:0000036">
    <property type="term" value="F:acyl carrier activity"/>
    <property type="evidence" value="ECO:0007669"/>
    <property type="project" value="UniProtKB-UniRule"/>
</dbReference>
<dbReference type="GO" id="GO:0009245">
    <property type="term" value="P:lipid A biosynthetic process"/>
    <property type="evidence" value="ECO:0007669"/>
    <property type="project" value="TreeGrafter"/>
</dbReference>
<dbReference type="FunFam" id="1.10.1200.10:FF:000001">
    <property type="entry name" value="Acyl carrier protein"/>
    <property type="match status" value="1"/>
</dbReference>
<dbReference type="Gene3D" id="1.10.1200.10">
    <property type="entry name" value="ACP-like"/>
    <property type="match status" value="1"/>
</dbReference>
<dbReference type="HAMAP" id="MF_01217">
    <property type="entry name" value="Acyl_carrier"/>
    <property type="match status" value="1"/>
</dbReference>
<dbReference type="InterPro" id="IPR003231">
    <property type="entry name" value="ACP"/>
</dbReference>
<dbReference type="InterPro" id="IPR036736">
    <property type="entry name" value="ACP-like_sf"/>
</dbReference>
<dbReference type="InterPro" id="IPR009081">
    <property type="entry name" value="PP-bd_ACP"/>
</dbReference>
<dbReference type="InterPro" id="IPR006162">
    <property type="entry name" value="Ppantetheine_attach_site"/>
</dbReference>
<dbReference type="NCBIfam" id="TIGR00517">
    <property type="entry name" value="acyl_carrier"/>
    <property type="match status" value="1"/>
</dbReference>
<dbReference type="NCBIfam" id="NF002148">
    <property type="entry name" value="PRK00982.1-2"/>
    <property type="match status" value="1"/>
</dbReference>
<dbReference type="NCBIfam" id="NF002149">
    <property type="entry name" value="PRK00982.1-3"/>
    <property type="match status" value="1"/>
</dbReference>
<dbReference type="NCBIfam" id="NF002150">
    <property type="entry name" value="PRK00982.1-4"/>
    <property type="match status" value="1"/>
</dbReference>
<dbReference type="NCBIfam" id="NF002151">
    <property type="entry name" value="PRK00982.1-5"/>
    <property type="match status" value="1"/>
</dbReference>
<dbReference type="PANTHER" id="PTHR20863">
    <property type="entry name" value="ACYL CARRIER PROTEIN"/>
    <property type="match status" value="1"/>
</dbReference>
<dbReference type="PANTHER" id="PTHR20863:SF76">
    <property type="entry name" value="CARRIER DOMAIN-CONTAINING PROTEIN"/>
    <property type="match status" value="1"/>
</dbReference>
<dbReference type="Pfam" id="PF00550">
    <property type="entry name" value="PP-binding"/>
    <property type="match status" value="1"/>
</dbReference>
<dbReference type="SUPFAM" id="SSF47336">
    <property type="entry name" value="ACP-like"/>
    <property type="match status" value="1"/>
</dbReference>
<dbReference type="PROSITE" id="PS50075">
    <property type="entry name" value="CARRIER"/>
    <property type="match status" value="1"/>
</dbReference>
<dbReference type="PROSITE" id="PS00012">
    <property type="entry name" value="PHOSPHOPANTETHEINE"/>
    <property type="match status" value="1"/>
</dbReference>
<comment type="function">
    <text evidence="1">Carrier of the growing fatty acid chain in fatty acid biosynthesis.</text>
</comment>
<comment type="pathway">
    <text evidence="1">Lipid metabolism; fatty acid biosynthesis.</text>
</comment>
<comment type="subcellular location">
    <subcellularLocation>
        <location evidence="1">Cytoplasm</location>
    </subcellularLocation>
</comment>
<comment type="PTM">
    <text evidence="1">4'-phosphopantetheine is transferred from CoA to a specific serine of apo-ACP by AcpS. This modification is essential for activity because fatty acids are bound in thioester linkage to the sulfhydryl of the prosthetic group.</text>
</comment>
<comment type="similarity">
    <text evidence="1">Belongs to the acyl carrier protein (ACP) family.</text>
</comment>
<keyword id="KW-0963">Cytoplasm</keyword>
<keyword id="KW-0275">Fatty acid biosynthesis</keyword>
<keyword id="KW-0276">Fatty acid metabolism</keyword>
<keyword id="KW-0444">Lipid biosynthesis</keyword>
<keyword id="KW-0443">Lipid metabolism</keyword>
<keyword id="KW-0596">Phosphopantetheine</keyword>
<keyword id="KW-0597">Phosphoprotein</keyword>